<reference key="1">
    <citation type="journal article" date="2006" name="PLoS Genet.">
        <title>Comparative genomics of emerging human ehrlichiosis agents.</title>
        <authorList>
            <person name="Dunning Hotopp J.C."/>
            <person name="Lin M."/>
            <person name="Madupu R."/>
            <person name="Crabtree J."/>
            <person name="Angiuoli S.V."/>
            <person name="Eisen J.A."/>
            <person name="Seshadri R."/>
            <person name="Ren Q."/>
            <person name="Wu M."/>
            <person name="Utterback T.R."/>
            <person name="Smith S."/>
            <person name="Lewis M."/>
            <person name="Khouri H."/>
            <person name="Zhang C."/>
            <person name="Niu H."/>
            <person name="Lin Q."/>
            <person name="Ohashi N."/>
            <person name="Zhi N."/>
            <person name="Nelson W.C."/>
            <person name="Brinkac L.M."/>
            <person name="Dodson R.J."/>
            <person name="Rosovitz M.J."/>
            <person name="Sundaram J.P."/>
            <person name="Daugherty S.C."/>
            <person name="Davidsen T."/>
            <person name="Durkin A.S."/>
            <person name="Gwinn M.L."/>
            <person name="Haft D.H."/>
            <person name="Selengut J.D."/>
            <person name="Sullivan S.A."/>
            <person name="Zafar N."/>
            <person name="Zhou L."/>
            <person name="Benahmed F."/>
            <person name="Forberger H."/>
            <person name="Halpin R."/>
            <person name="Mulligan S."/>
            <person name="Robinson J."/>
            <person name="White O."/>
            <person name="Rikihisa Y."/>
            <person name="Tettelin H."/>
        </authorList>
    </citation>
    <scope>NUCLEOTIDE SEQUENCE [LARGE SCALE GENOMIC DNA]</scope>
    <source>
        <strain>ATCC CRL-10679 / Arkansas</strain>
    </source>
</reference>
<keyword id="KW-1185">Reference proteome</keyword>
<keyword id="KW-0687">Ribonucleoprotein</keyword>
<keyword id="KW-0689">Ribosomal protein</keyword>
<keyword id="KW-0694">RNA-binding</keyword>
<keyword id="KW-0699">rRNA-binding</keyword>
<protein>
    <recommendedName>
        <fullName evidence="1">Large ribosomal subunit protein uL22</fullName>
    </recommendedName>
    <alternativeName>
        <fullName evidence="2">50S ribosomal protein L22</fullName>
    </alternativeName>
</protein>
<dbReference type="EMBL" id="CP000236">
    <property type="protein sequence ID" value="ABD44591.1"/>
    <property type="status" value="ALT_INIT"/>
    <property type="molecule type" value="Genomic_DNA"/>
</dbReference>
<dbReference type="RefSeq" id="WP_044148004.1">
    <property type="nucleotide sequence ID" value="NC_007799.1"/>
</dbReference>
<dbReference type="SMR" id="Q2GH51"/>
<dbReference type="STRING" id="205920.ECH_0414"/>
<dbReference type="KEGG" id="ech:ECH_0414"/>
<dbReference type="eggNOG" id="COG0091">
    <property type="taxonomic scope" value="Bacteria"/>
</dbReference>
<dbReference type="HOGENOM" id="CLU_083987_3_0_5"/>
<dbReference type="OrthoDB" id="9805969at2"/>
<dbReference type="Proteomes" id="UP000008320">
    <property type="component" value="Chromosome"/>
</dbReference>
<dbReference type="GO" id="GO:0022625">
    <property type="term" value="C:cytosolic large ribosomal subunit"/>
    <property type="evidence" value="ECO:0007669"/>
    <property type="project" value="TreeGrafter"/>
</dbReference>
<dbReference type="GO" id="GO:0019843">
    <property type="term" value="F:rRNA binding"/>
    <property type="evidence" value="ECO:0007669"/>
    <property type="project" value="UniProtKB-UniRule"/>
</dbReference>
<dbReference type="GO" id="GO:0003735">
    <property type="term" value="F:structural constituent of ribosome"/>
    <property type="evidence" value="ECO:0007669"/>
    <property type="project" value="InterPro"/>
</dbReference>
<dbReference type="GO" id="GO:0006412">
    <property type="term" value="P:translation"/>
    <property type="evidence" value="ECO:0007669"/>
    <property type="project" value="UniProtKB-UniRule"/>
</dbReference>
<dbReference type="CDD" id="cd00336">
    <property type="entry name" value="Ribosomal_L22"/>
    <property type="match status" value="1"/>
</dbReference>
<dbReference type="Gene3D" id="3.90.470.10">
    <property type="entry name" value="Ribosomal protein L22/L17"/>
    <property type="match status" value="1"/>
</dbReference>
<dbReference type="HAMAP" id="MF_01331_B">
    <property type="entry name" value="Ribosomal_uL22_B"/>
    <property type="match status" value="1"/>
</dbReference>
<dbReference type="InterPro" id="IPR001063">
    <property type="entry name" value="Ribosomal_uL22"/>
</dbReference>
<dbReference type="InterPro" id="IPR005727">
    <property type="entry name" value="Ribosomal_uL22_bac/chlpt-type"/>
</dbReference>
<dbReference type="InterPro" id="IPR047867">
    <property type="entry name" value="Ribosomal_uL22_bac/org-type"/>
</dbReference>
<dbReference type="InterPro" id="IPR018260">
    <property type="entry name" value="Ribosomal_uL22_CS"/>
</dbReference>
<dbReference type="InterPro" id="IPR036394">
    <property type="entry name" value="Ribosomal_uL22_sf"/>
</dbReference>
<dbReference type="NCBIfam" id="TIGR01044">
    <property type="entry name" value="rplV_bact"/>
    <property type="match status" value="1"/>
</dbReference>
<dbReference type="PANTHER" id="PTHR13501">
    <property type="entry name" value="CHLOROPLAST 50S RIBOSOMAL PROTEIN L22-RELATED"/>
    <property type="match status" value="1"/>
</dbReference>
<dbReference type="PANTHER" id="PTHR13501:SF8">
    <property type="entry name" value="LARGE RIBOSOMAL SUBUNIT PROTEIN UL22M"/>
    <property type="match status" value="1"/>
</dbReference>
<dbReference type="Pfam" id="PF00237">
    <property type="entry name" value="Ribosomal_L22"/>
    <property type="match status" value="1"/>
</dbReference>
<dbReference type="SUPFAM" id="SSF54843">
    <property type="entry name" value="Ribosomal protein L22"/>
    <property type="match status" value="1"/>
</dbReference>
<dbReference type="PROSITE" id="PS00464">
    <property type="entry name" value="RIBOSOMAL_L22"/>
    <property type="match status" value="1"/>
</dbReference>
<comment type="function">
    <text evidence="1">This protein binds specifically to 23S rRNA; its binding is stimulated by other ribosomal proteins, e.g. L4, L17, and L20. It is important during the early stages of 50S assembly. It makes multiple contacts with different domains of the 23S rRNA in the assembled 50S subunit and ribosome (By similarity).</text>
</comment>
<comment type="function">
    <text evidence="1">The globular domain of the protein is located near the polypeptide exit tunnel on the outside of the subunit, while an extended beta-hairpin is found that lines the wall of the exit tunnel in the center of the 70S ribosome.</text>
</comment>
<comment type="subunit">
    <text evidence="1">Part of the 50S ribosomal subunit.</text>
</comment>
<comment type="similarity">
    <text evidence="1">Belongs to the universal ribosomal protein uL22 family.</text>
</comment>
<comment type="sequence caution" evidence="2">
    <conflict type="erroneous initiation">
        <sequence resource="EMBL-CDS" id="ABD44591"/>
    </conflict>
</comment>
<proteinExistence type="inferred from homology"/>
<evidence type="ECO:0000255" key="1">
    <source>
        <dbReference type="HAMAP-Rule" id="MF_01331"/>
    </source>
</evidence>
<evidence type="ECO:0000305" key="2"/>
<organism>
    <name type="scientific">Ehrlichia chaffeensis (strain ATCC CRL-10679 / Arkansas)</name>
    <dbReference type="NCBI Taxonomy" id="205920"/>
    <lineage>
        <taxon>Bacteria</taxon>
        <taxon>Pseudomonadati</taxon>
        <taxon>Pseudomonadota</taxon>
        <taxon>Alphaproteobacteria</taxon>
        <taxon>Rickettsiales</taxon>
        <taxon>Anaplasmataceae</taxon>
        <taxon>Ehrlichia</taxon>
    </lineage>
</organism>
<sequence>MSKVLIVAKGMGLKSTPSKLNLVADLIRGKDVSVAMMYLKFCRKKSAGYISKVLKSAVANAQANYNIDLDNLYVKEVLVGKSFSLRRIHARARGKACRVYKHYGNVIIKLFERI</sequence>
<accession>Q2GH51</accession>
<feature type="chain" id="PRO_0000354465" description="Large ribosomal subunit protein uL22">
    <location>
        <begin position="1"/>
        <end position="114"/>
    </location>
</feature>
<name>RL22_EHRCR</name>
<gene>
    <name evidence="1" type="primary">rplV</name>
    <name type="ordered locus">ECH_0414</name>
</gene>